<name>ZG29_XENLA</name>
<dbReference type="PIR" id="S06568">
    <property type="entry name" value="S06568"/>
</dbReference>
<dbReference type="SMR" id="P18717"/>
<dbReference type="Proteomes" id="UP000186698">
    <property type="component" value="Unplaced"/>
</dbReference>
<dbReference type="GO" id="GO:0005634">
    <property type="term" value="C:nucleus"/>
    <property type="evidence" value="ECO:0007669"/>
    <property type="project" value="UniProtKB-SubCell"/>
</dbReference>
<dbReference type="GO" id="GO:0003677">
    <property type="term" value="F:DNA binding"/>
    <property type="evidence" value="ECO:0007669"/>
    <property type="project" value="UniProtKB-KW"/>
</dbReference>
<dbReference type="GO" id="GO:0008270">
    <property type="term" value="F:zinc ion binding"/>
    <property type="evidence" value="ECO:0007669"/>
    <property type="project" value="UniProtKB-KW"/>
</dbReference>
<dbReference type="FunFam" id="3.30.160.60:FF:000100">
    <property type="entry name" value="Zinc finger 45-like"/>
    <property type="match status" value="1"/>
</dbReference>
<dbReference type="FunFam" id="3.30.160.60:FF:000759">
    <property type="entry name" value="zinc finger protein 16"/>
    <property type="match status" value="1"/>
</dbReference>
<dbReference type="FunFam" id="3.30.160.60:FF:000145">
    <property type="entry name" value="Zinc finger protein 574"/>
    <property type="match status" value="1"/>
</dbReference>
<dbReference type="FunFam" id="3.30.160.60:FF:000771">
    <property type="entry name" value="zinc finger protein 648"/>
    <property type="match status" value="1"/>
</dbReference>
<dbReference type="FunFam" id="3.30.160.60:FF:000624">
    <property type="entry name" value="zinc finger protein 697"/>
    <property type="match status" value="1"/>
</dbReference>
<dbReference type="Gene3D" id="3.30.160.60">
    <property type="entry name" value="Classic Zinc Finger"/>
    <property type="match status" value="5"/>
</dbReference>
<dbReference type="InterPro" id="IPR050636">
    <property type="entry name" value="C2H2-ZF_domain-containing"/>
</dbReference>
<dbReference type="InterPro" id="IPR036236">
    <property type="entry name" value="Znf_C2H2_sf"/>
</dbReference>
<dbReference type="InterPro" id="IPR013087">
    <property type="entry name" value="Znf_C2H2_type"/>
</dbReference>
<dbReference type="PANTHER" id="PTHR47772:SF13">
    <property type="entry name" value="GASTRULA ZINC FINGER PROTEIN XLCGF49.1-LIKE-RELATED"/>
    <property type="match status" value="1"/>
</dbReference>
<dbReference type="PANTHER" id="PTHR47772">
    <property type="entry name" value="ZINC FINGER PROTEIN 200"/>
    <property type="match status" value="1"/>
</dbReference>
<dbReference type="Pfam" id="PF00096">
    <property type="entry name" value="zf-C2H2"/>
    <property type="match status" value="5"/>
</dbReference>
<dbReference type="SMART" id="SM00355">
    <property type="entry name" value="ZnF_C2H2"/>
    <property type="match status" value="5"/>
</dbReference>
<dbReference type="SUPFAM" id="SSF57667">
    <property type="entry name" value="beta-beta-alpha zinc fingers"/>
    <property type="match status" value="3"/>
</dbReference>
<dbReference type="PROSITE" id="PS00028">
    <property type="entry name" value="ZINC_FINGER_C2H2_1"/>
    <property type="match status" value="4"/>
</dbReference>
<dbReference type="PROSITE" id="PS50157">
    <property type="entry name" value="ZINC_FINGER_C2H2_2"/>
    <property type="match status" value="5"/>
</dbReference>
<sequence length="139" mass="16398">TKDKSFTCTECEESFSLKSRLIAHLLIHTGEKPFDSTKCGKGFRRNQYLKEHLSTHREDRPFVCTVCGKTYKYKHGLNTHLHSHKVNTYFPCSECRKIFSSKASLDIHLRHHTEKTFPCTECDKTFKQKKNLKRHQMIH</sequence>
<comment type="function">
    <text>May be involved in transcriptional regulation.</text>
</comment>
<comment type="subcellular location">
    <subcellularLocation>
        <location evidence="2">Nucleus</location>
    </subcellularLocation>
</comment>
<comment type="similarity">
    <text evidence="2">Belongs to the krueppel C2H2-type zinc-finger protein family.</text>
</comment>
<accession>P18717</accession>
<reference key="1">
    <citation type="journal article" date="1989" name="J. Mol. Biol.">
        <title>Second-order repeats in Xenopus laevis finger proteins.</title>
        <authorList>
            <person name="Nietfeld W."/>
            <person name="El-Baradi T."/>
            <person name="Mentzel H."/>
            <person name="Pieler T."/>
            <person name="Koester M."/>
            <person name="Poeting A."/>
            <person name="Knoechel W."/>
        </authorList>
    </citation>
    <scope>NUCLEOTIDE SEQUENCE</scope>
</reference>
<keyword id="KW-0238">DNA-binding</keyword>
<keyword id="KW-0479">Metal-binding</keyword>
<keyword id="KW-0539">Nucleus</keyword>
<keyword id="KW-1185">Reference proteome</keyword>
<keyword id="KW-0677">Repeat</keyword>
<keyword id="KW-0804">Transcription</keyword>
<keyword id="KW-0805">Transcription regulation</keyword>
<keyword id="KW-0862">Zinc</keyword>
<keyword id="KW-0863">Zinc-finger</keyword>
<evidence type="ECO:0000255" key="1">
    <source>
        <dbReference type="PROSITE-ProRule" id="PRU00042"/>
    </source>
</evidence>
<evidence type="ECO:0000305" key="2"/>
<feature type="chain" id="PRO_0000047791" description="Gastrula zinc finger protein XlCGF29.1">
    <location>
        <begin position="1" status="less than"/>
        <end position="139" status="greater than"/>
    </location>
</feature>
<feature type="zinc finger region" description="C2H2-type 1" evidence="1">
    <location>
        <begin position="6"/>
        <end position="28"/>
    </location>
</feature>
<feature type="zinc finger region" description="C2H2-type 2" evidence="1">
    <location>
        <begin position="34"/>
        <end position="56"/>
    </location>
</feature>
<feature type="zinc finger region" description="C2H2-type 3" evidence="1">
    <location>
        <begin position="62"/>
        <end position="84"/>
    </location>
</feature>
<feature type="zinc finger region" description="C2H2-type 4" evidence="1">
    <location>
        <begin position="90"/>
        <end position="112"/>
    </location>
</feature>
<feature type="zinc finger region" description="C2H2-type 5" evidence="1">
    <location>
        <begin position="117"/>
        <end position="139"/>
    </location>
</feature>
<feature type="non-terminal residue">
    <location>
        <position position="1"/>
    </location>
</feature>
<feature type="non-terminal residue">
    <location>
        <position position="139"/>
    </location>
</feature>
<proteinExistence type="inferred from homology"/>
<organism>
    <name type="scientific">Xenopus laevis</name>
    <name type="common">African clawed frog</name>
    <dbReference type="NCBI Taxonomy" id="8355"/>
    <lineage>
        <taxon>Eukaryota</taxon>
        <taxon>Metazoa</taxon>
        <taxon>Chordata</taxon>
        <taxon>Craniata</taxon>
        <taxon>Vertebrata</taxon>
        <taxon>Euteleostomi</taxon>
        <taxon>Amphibia</taxon>
        <taxon>Batrachia</taxon>
        <taxon>Anura</taxon>
        <taxon>Pipoidea</taxon>
        <taxon>Pipidae</taxon>
        <taxon>Xenopodinae</taxon>
        <taxon>Xenopus</taxon>
        <taxon>Xenopus</taxon>
    </lineage>
</organism>
<protein>
    <recommendedName>
        <fullName>Gastrula zinc finger protein XlCGF29.1</fullName>
    </recommendedName>
</protein>